<reference key="1">
    <citation type="journal article" date="2009" name="Appl. Environ. Microbiol.">
        <title>Novel features of the polysaccharide-digesting gliding bacterium Flavobacterium johnsoniae as revealed by genome sequence analysis.</title>
        <authorList>
            <person name="McBride M.J."/>
            <person name="Xie G."/>
            <person name="Martens E.C."/>
            <person name="Lapidus A."/>
            <person name="Henrissat B."/>
            <person name="Rhodes R.G."/>
            <person name="Goltsman E."/>
            <person name="Wang W."/>
            <person name="Xu J."/>
            <person name="Hunnicutt D.W."/>
            <person name="Staroscik A.M."/>
            <person name="Hoover T.R."/>
            <person name="Cheng Y.Q."/>
            <person name="Stein J.L."/>
        </authorList>
    </citation>
    <scope>NUCLEOTIDE SEQUENCE [LARGE SCALE GENOMIC DNA]</scope>
    <source>
        <strain>ATCC 17061 / DSM 2064 / JCM 8514 / BCRC 14874 / CCUG 350202 / NBRC 14942 / NCIMB 11054 / UW101</strain>
    </source>
</reference>
<feature type="chain" id="PRO_0000381384" description="Biotin synthase">
    <location>
        <begin position="1"/>
        <end position="363"/>
    </location>
</feature>
<feature type="domain" description="Radical SAM core" evidence="2">
    <location>
        <begin position="40"/>
        <end position="268"/>
    </location>
</feature>
<feature type="binding site" evidence="1">
    <location>
        <position position="55"/>
    </location>
    <ligand>
        <name>[4Fe-4S] cluster</name>
        <dbReference type="ChEBI" id="CHEBI:49883"/>
        <note>4Fe-4S-S-AdoMet</note>
    </ligand>
</feature>
<feature type="binding site" evidence="1">
    <location>
        <position position="59"/>
    </location>
    <ligand>
        <name>[4Fe-4S] cluster</name>
        <dbReference type="ChEBI" id="CHEBI:49883"/>
        <note>4Fe-4S-S-AdoMet</note>
    </ligand>
</feature>
<feature type="binding site" evidence="1">
    <location>
        <position position="62"/>
    </location>
    <ligand>
        <name>[4Fe-4S] cluster</name>
        <dbReference type="ChEBI" id="CHEBI:49883"/>
        <note>4Fe-4S-S-AdoMet</note>
    </ligand>
</feature>
<feature type="binding site" evidence="1">
    <location>
        <position position="99"/>
    </location>
    <ligand>
        <name>[2Fe-2S] cluster</name>
        <dbReference type="ChEBI" id="CHEBI:190135"/>
    </ligand>
</feature>
<feature type="binding site" evidence="1">
    <location>
        <position position="131"/>
    </location>
    <ligand>
        <name>[2Fe-2S] cluster</name>
        <dbReference type="ChEBI" id="CHEBI:190135"/>
    </ligand>
</feature>
<feature type="binding site" evidence="1">
    <location>
        <position position="191"/>
    </location>
    <ligand>
        <name>[2Fe-2S] cluster</name>
        <dbReference type="ChEBI" id="CHEBI:190135"/>
    </ligand>
</feature>
<feature type="binding site" evidence="1">
    <location>
        <position position="263"/>
    </location>
    <ligand>
        <name>[2Fe-2S] cluster</name>
        <dbReference type="ChEBI" id="CHEBI:190135"/>
    </ligand>
</feature>
<dbReference type="EC" id="2.8.1.6" evidence="1"/>
<dbReference type="EMBL" id="CP000685">
    <property type="protein sequence ID" value="ABQ03835.1"/>
    <property type="molecule type" value="Genomic_DNA"/>
</dbReference>
<dbReference type="RefSeq" id="WP_012022889.1">
    <property type="nucleotide sequence ID" value="NC_009441.1"/>
</dbReference>
<dbReference type="SMR" id="A5FLT1"/>
<dbReference type="STRING" id="376686.Fjoh_0801"/>
<dbReference type="KEGG" id="fjo:Fjoh_0801"/>
<dbReference type="eggNOG" id="COG0502">
    <property type="taxonomic scope" value="Bacteria"/>
</dbReference>
<dbReference type="HOGENOM" id="CLU_033172_1_2_10"/>
<dbReference type="OrthoDB" id="9786826at2"/>
<dbReference type="UniPathway" id="UPA00078">
    <property type="reaction ID" value="UER00162"/>
</dbReference>
<dbReference type="Proteomes" id="UP000006694">
    <property type="component" value="Chromosome"/>
</dbReference>
<dbReference type="GO" id="GO:0051537">
    <property type="term" value="F:2 iron, 2 sulfur cluster binding"/>
    <property type="evidence" value="ECO:0007669"/>
    <property type="project" value="UniProtKB-KW"/>
</dbReference>
<dbReference type="GO" id="GO:0051539">
    <property type="term" value="F:4 iron, 4 sulfur cluster binding"/>
    <property type="evidence" value="ECO:0007669"/>
    <property type="project" value="UniProtKB-KW"/>
</dbReference>
<dbReference type="GO" id="GO:0004076">
    <property type="term" value="F:biotin synthase activity"/>
    <property type="evidence" value="ECO:0007669"/>
    <property type="project" value="UniProtKB-UniRule"/>
</dbReference>
<dbReference type="GO" id="GO:0005506">
    <property type="term" value="F:iron ion binding"/>
    <property type="evidence" value="ECO:0007669"/>
    <property type="project" value="UniProtKB-UniRule"/>
</dbReference>
<dbReference type="GO" id="GO:0009102">
    <property type="term" value="P:biotin biosynthetic process"/>
    <property type="evidence" value="ECO:0007669"/>
    <property type="project" value="UniProtKB-UniRule"/>
</dbReference>
<dbReference type="CDD" id="cd01335">
    <property type="entry name" value="Radical_SAM"/>
    <property type="match status" value="1"/>
</dbReference>
<dbReference type="FunFam" id="3.20.20.70:FF:000011">
    <property type="entry name" value="Biotin synthase"/>
    <property type="match status" value="1"/>
</dbReference>
<dbReference type="Gene3D" id="3.20.20.70">
    <property type="entry name" value="Aldolase class I"/>
    <property type="match status" value="1"/>
</dbReference>
<dbReference type="HAMAP" id="MF_01694">
    <property type="entry name" value="BioB"/>
    <property type="match status" value="1"/>
</dbReference>
<dbReference type="InterPro" id="IPR013785">
    <property type="entry name" value="Aldolase_TIM"/>
</dbReference>
<dbReference type="InterPro" id="IPR010722">
    <property type="entry name" value="BATS_dom"/>
</dbReference>
<dbReference type="InterPro" id="IPR002684">
    <property type="entry name" value="Biotin_synth/BioAB"/>
</dbReference>
<dbReference type="InterPro" id="IPR024177">
    <property type="entry name" value="Biotin_synthase"/>
</dbReference>
<dbReference type="InterPro" id="IPR006638">
    <property type="entry name" value="Elp3/MiaA/NifB-like_rSAM"/>
</dbReference>
<dbReference type="InterPro" id="IPR007197">
    <property type="entry name" value="rSAM"/>
</dbReference>
<dbReference type="NCBIfam" id="TIGR00433">
    <property type="entry name" value="bioB"/>
    <property type="match status" value="1"/>
</dbReference>
<dbReference type="PANTHER" id="PTHR22976">
    <property type="entry name" value="BIOTIN SYNTHASE"/>
    <property type="match status" value="1"/>
</dbReference>
<dbReference type="PANTHER" id="PTHR22976:SF2">
    <property type="entry name" value="BIOTIN SYNTHASE, MITOCHONDRIAL"/>
    <property type="match status" value="1"/>
</dbReference>
<dbReference type="Pfam" id="PF06968">
    <property type="entry name" value="BATS"/>
    <property type="match status" value="1"/>
</dbReference>
<dbReference type="Pfam" id="PF04055">
    <property type="entry name" value="Radical_SAM"/>
    <property type="match status" value="1"/>
</dbReference>
<dbReference type="PIRSF" id="PIRSF001619">
    <property type="entry name" value="Biotin_synth"/>
    <property type="match status" value="1"/>
</dbReference>
<dbReference type="SFLD" id="SFLDF00272">
    <property type="entry name" value="biotin_synthase"/>
    <property type="match status" value="1"/>
</dbReference>
<dbReference type="SFLD" id="SFLDS00029">
    <property type="entry name" value="Radical_SAM"/>
    <property type="match status" value="1"/>
</dbReference>
<dbReference type="SMART" id="SM00876">
    <property type="entry name" value="BATS"/>
    <property type="match status" value="1"/>
</dbReference>
<dbReference type="SMART" id="SM00729">
    <property type="entry name" value="Elp3"/>
    <property type="match status" value="1"/>
</dbReference>
<dbReference type="SUPFAM" id="SSF102114">
    <property type="entry name" value="Radical SAM enzymes"/>
    <property type="match status" value="1"/>
</dbReference>
<dbReference type="PROSITE" id="PS51918">
    <property type="entry name" value="RADICAL_SAM"/>
    <property type="match status" value="1"/>
</dbReference>
<protein>
    <recommendedName>
        <fullName evidence="1">Biotin synthase</fullName>
        <ecNumber evidence="1">2.8.1.6</ecNumber>
    </recommendedName>
</protein>
<proteinExistence type="inferred from homology"/>
<keyword id="KW-0001">2Fe-2S</keyword>
<keyword id="KW-0004">4Fe-4S</keyword>
<keyword id="KW-0093">Biotin biosynthesis</keyword>
<keyword id="KW-0408">Iron</keyword>
<keyword id="KW-0411">Iron-sulfur</keyword>
<keyword id="KW-0479">Metal-binding</keyword>
<keyword id="KW-0949">S-adenosyl-L-methionine</keyword>
<keyword id="KW-0808">Transferase</keyword>
<sequence length="363" mass="40267">MSMTTKHNWTKDEIIAIYNKPLMDLLYEAATIHRQQHDPNVVQVSTLLSIKTGGCPEDCGYCPQAARYNTGVEGNDLMTVSQVKAQALRAKSNGSSRVCMGAAWRNVKDGEEFDQVLEMVRTINKLDMEVCCTLGMLTENQAQRLAEAGLYAYNHNLDTSEEYYKDVISTRGFEDRLQTIENVRKTNVTVCSGGIIGMGESIEDRAGMLVALSTLNPQPESVPINALVAVEGTPMEEEKPVEIWEMIRMVATTRIVMPETQVRLSAGRTNMSREGQAMCFFAGANSIFAGDKLLTTPNPDVNEDMKMFETLGMVAQKPFIKIMQPKTVEAADSQFAPLGEKPKWSRPGHTIERNIEASIKSKI</sequence>
<comment type="function">
    <text evidence="1">Catalyzes the conversion of dethiobiotin (DTB) to biotin by the insertion of a sulfur atom into dethiobiotin via a radical-based mechanism.</text>
</comment>
<comment type="catalytic activity">
    <reaction evidence="1">
        <text>(4R,5S)-dethiobiotin + (sulfur carrier)-SH + 2 reduced [2Fe-2S]-[ferredoxin] + 2 S-adenosyl-L-methionine = (sulfur carrier)-H + biotin + 2 5'-deoxyadenosine + 2 L-methionine + 2 oxidized [2Fe-2S]-[ferredoxin]</text>
        <dbReference type="Rhea" id="RHEA:22060"/>
        <dbReference type="Rhea" id="RHEA-COMP:10000"/>
        <dbReference type="Rhea" id="RHEA-COMP:10001"/>
        <dbReference type="Rhea" id="RHEA-COMP:14737"/>
        <dbReference type="Rhea" id="RHEA-COMP:14739"/>
        <dbReference type="ChEBI" id="CHEBI:17319"/>
        <dbReference type="ChEBI" id="CHEBI:29917"/>
        <dbReference type="ChEBI" id="CHEBI:33737"/>
        <dbReference type="ChEBI" id="CHEBI:33738"/>
        <dbReference type="ChEBI" id="CHEBI:57586"/>
        <dbReference type="ChEBI" id="CHEBI:57844"/>
        <dbReference type="ChEBI" id="CHEBI:59789"/>
        <dbReference type="ChEBI" id="CHEBI:64428"/>
        <dbReference type="ChEBI" id="CHEBI:149473"/>
        <dbReference type="EC" id="2.8.1.6"/>
    </reaction>
</comment>
<comment type="cofactor">
    <cofactor evidence="1">
        <name>[4Fe-4S] cluster</name>
        <dbReference type="ChEBI" id="CHEBI:49883"/>
    </cofactor>
    <text evidence="1">Binds 1 [4Fe-4S] cluster. The cluster is coordinated with 3 cysteines and an exchangeable S-adenosyl-L-methionine.</text>
</comment>
<comment type="cofactor">
    <cofactor evidence="1">
        <name>[2Fe-2S] cluster</name>
        <dbReference type="ChEBI" id="CHEBI:190135"/>
    </cofactor>
    <text evidence="1">Binds 1 [2Fe-2S] cluster. The cluster is coordinated with 3 cysteines and 1 arginine.</text>
</comment>
<comment type="pathway">
    <text evidence="1">Cofactor biosynthesis; biotin biosynthesis; biotin from 7,8-diaminononanoate: step 2/2.</text>
</comment>
<comment type="subunit">
    <text evidence="1">Homodimer.</text>
</comment>
<comment type="similarity">
    <text evidence="1">Belongs to the radical SAM superfamily. Biotin synthase family.</text>
</comment>
<gene>
    <name evidence="1" type="primary">bioB</name>
    <name type="ordered locus">Fjoh_0801</name>
</gene>
<organism>
    <name type="scientific">Flavobacterium johnsoniae (strain ATCC 17061 / DSM 2064 / JCM 8514 / BCRC 14874 / CCUG 350202 / NBRC 14942 / NCIMB 11054 / UW101)</name>
    <name type="common">Cytophaga johnsonae</name>
    <dbReference type="NCBI Taxonomy" id="376686"/>
    <lineage>
        <taxon>Bacteria</taxon>
        <taxon>Pseudomonadati</taxon>
        <taxon>Bacteroidota</taxon>
        <taxon>Flavobacteriia</taxon>
        <taxon>Flavobacteriales</taxon>
        <taxon>Flavobacteriaceae</taxon>
        <taxon>Flavobacterium</taxon>
    </lineage>
</organism>
<accession>A5FLT1</accession>
<evidence type="ECO:0000255" key="1">
    <source>
        <dbReference type="HAMAP-Rule" id="MF_01694"/>
    </source>
</evidence>
<evidence type="ECO:0000255" key="2">
    <source>
        <dbReference type="PROSITE-ProRule" id="PRU01266"/>
    </source>
</evidence>
<name>BIOB_FLAJ1</name>